<protein>
    <recommendedName>
        <fullName>Uncharacterized protein Rv2891</fullName>
    </recommendedName>
</protein>
<accession>P9WL33</accession>
<accession>L0TDP0</accession>
<accession>P65047</accession>
<accession>Q10812</accession>
<evidence type="ECO:0000255" key="1"/>
<evidence type="ECO:0000256" key="2">
    <source>
        <dbReference type="SAM" id="MobiDB-lite"/>
    </source>
</evidence>
<proteinExistence type="inferred from homology"/>
<name>Y2891_MYCTU</name>
<dbReference type="EMBL" id="AL123456">
    <property type="protein sequence ID" value="CCP45693.1"/>
    <property type="molecule type" value="Genomic_DNA"/>
</dbReference>
<dbReference type="PIR" id="F70925">
    <property type="entry name" value="F70925"/>
</dbReference>
<dbReference type="RefSeq" id="NP_217407.1">
    <property type="nucleotide sequence ID" value="NC_000962.3"/>
</dbReference>
<dbReference type="RefSeq" id="WP_003414678.1">
    <property type="nucleotide sequence ID" value="NC_000962.3"/>
</dbReference>
<dbReference type="SMR" id="P9WL33"/>
<dbReference type="FunCoup" id="P9WL33">
    <property type="interactions" value="1"/>
</dbReference>
<dbReference type="STRING" id="83332.Rv2891"/>
<dbReference type="PaxDb" id="83332-Rv2891"/>
<dbReference type="DNASU" id="888328"/>
<dbReference type="GeneID" id="888328"/>
<dbReference type="KEGG" id="mtu:Rv2891"/>
<dbReference type="KEGG" id="mtv:RVBD_2891"/>
<dbReference type="TubercuList" id="Rv2891"/>
<dbReference type="eggNOG" id="COG0739">
    <property type="taxonomic scope" value="Bacteria"/>
</dbReference>
<dbReference type="InParanoid" id="P9WL33"/>
<dbReference type="OrthoDB" id="5245088at2"/>
<dbReference type="PhylomeDB" id="P9WL33"/>
<dbReference type="Proteomes" id="UP000001584">
    <property type="component" value="Chromosome"/>
</dbReference>
<dbReference type="CDD" id="cd12797">
    <property type="entry name" value="M23_peptidase"/>
    <property type="match status" value="1"/>
</dbReference>
<dbReference type="Gene3D" id="2.70.70.10">
    <property type="entry name" value="Glucose Permease (Domain IIA)"/>
    <property type="match status" value="1"/>
</dbReference>
<dbReference type="InterPro" id="IPR050570">
    <property type="entry name" value="Cell_wall_metabolism_enzyme"/>
</dbReference>
<dbReference type="InterPro" id="IPR011055">
    <property type="entry name" value="Dup_hybrid_motif"/>
</dbReference>
<dbReference type="InterPro" id="IPR016047">
    <property type="entry name" value="Peptidase_M23"/>
</dbReference>
<dbReference type="PANTHER" id="PTHR21666:SF289">
    <property type="entry name" value="L-ALA--D-GLU ENDOPEPTIDASE"/>
    <property type="match status" value="1"/>
</dbReference>
<dbReference type="PANTHER" id="PTHR21666">
    <property type="entry name" value="PEPTIDASE-RELATED"/>
    <property type="match status" value="1"/>
</dbReference>
<dbReference type="Pfam" id="PF01551">
    <property type="entry name" value="Peptidase_M23"/>
    <property type="match status" value="1"/>
</dbReference>
<dbReference type="SUPFAM" id="SSF51261">
    <property type="entry name" value="Duplicated hybrid motif"/>
    <property type="match status" value="1"/>
</dbReference>
<feature type="signal peptide" evidence="1">
    <location>
        <begin position="1"/>
        <end position="36"/>
    </location>
</feature>
<feature type="chain" id="PRO_0000014147" description="Uncharacterized protein Rv2891">
    <location>
        <begin position="37"/>
        <end position="249"/>
    </location>
</feature>
<feature type="region of interest" description="Disordered" evidence="2">
    <location>
        <begin position="227"/>
        <end position="249"/>
    </location>
</feature>
<organism>
    <name type="scientific">Mycobacterium tuberculosis (strain ATCC 25618 / H37Rv)</name>
    <dbReference type="NCBI Taxonomy" id="83332"/>
    <lineage>
        <taxon>Bacteria</taxon>
        <taxon>Bacillati</taxon>
        <taxon>Actinomycetota</taxon>
        <taxon>Actinomycetes</taxon>
        <taxon>Mycobacteriales</taxon>
        <taxon>Mycobacteriaceae</taxon>
        <taxon>Mycobacterium</taxon>
        <taxon>Mycobacterium tuberculosis complex</taxon>
    </lineage>
</organism>
<reference key="1">
    <citation type="journal article" date="1998" name="Nature">
        <title>Deciphering the biology of Mycobacterium tuberculosis from the complete genome sequence.</title>
        <authorList>
            <person name="Cole S.T."/>
            <person name="Brosch R."/>
            <person name="Parkhill J."/>
            <person name="Garnier T."/>
            <person name="Churcher C.M."/>
            <person name="Harris D.E."/>
            <person name="Gordon S.V."/>
            <person name="Eiglmeier K."/>
            <person name="Gas S."/>
            <person name="Barry C.E. III"/>
            <person name="Tekaia F."/>
            <person name="Badcock K."/>
            <person name="Basham D."/>
            <person name="Brown D."/>
            <person name="Chillingworth T."/>
            <person name="Connor R."/>
            <person name="Davies R.M."/>
            <person name="Devlin K."/>
            <person name="Feltwell T."/>
            <person name="Gentles S."/>
            <person name="Hamlin N."/>
            <person name="Holroyd S."/>
            <person name="Hornsby T."/>
            <person name="Jagels K."/>
            <person name="Krogh A."/>
            <person name="McLean J."/>
            <person name="Moule S."/>
            <person name="Murphy L.D."/>
            <person name="Oliver S."/>
            <person name="Osborne J."/>
            <person name="Quail M.A."/>
            <person name="Rajandream M.A."/>
            <person name="Rogers J."/>
            <person name="Rutter S."/>
            <person name="Seeger K."/>
            <person name="Skelton S."/>
            <person name="Squares S."/>
            <person name="Squares R."/>
            <person name="Sulston J.E."/>
            <person name="Taylor K."/>
            <person name="Whitehead S."/>
            <person name="Barrell B.G."/>
        </authorList>
    </citation>
    <scope>NUCLEOTIDE SEQUENCE [LARGE SCALE GENOMIC DNA]</scope>
    <source>
        <strain>ATCC 25618 / H37Rv</strain>
    </source>
</reference>
<keyword id="KW-1185">Reference proteome</keyword>
<keyword id="KW-0732">Signal</keyword>
<sequence length="249" mass="25807">MAKSPARRCTAKVRRVLSRSVLILCWSLLGAAPAHADDSRLGWPLRPPPAVVRQFDAASPNWNPGHRGVDLAGRPGQPVYAAGSATVVFAGLLAGRPVVSLAHPGGLRTSYEPVVAQVRVGQPVSAPTVIGALAAGHPGCQAAACLHWGAMWGPASGANYVDPLGLLKSTPIRLKPLSSEGRTLHYRQAEPVFVNEAAAGALAGAGHRKSPKQGVFRGAAQGGDIVARQPPGRWVCPSSAGGPIGWHRQ</sequence>
<gene>
    <name type="ordered locus">Rv2891</name>
    <name type="ORF">MTCY274.22</name>
</gene>